<proteinExistence type="inferred from homology"/>
<comment type="function">
    <text evidence="1">Catalyzes the stereoinversion of LL-2,6-diaminopimelate (L,L-DAP) to meso-diaminopimelate (meso-DAP), a precursor of L-lysine and an essential component of the bacterial peptidoglycan.</text>
</comment>
<comment type="catalytic activity">
    <reaction evidence="1">
        <text>(2S,6S)-2,6-diaminopimelate = meso-2,6-diaminopimelate</text>
        <dbReference type="Rhea" id="RHEA:15393"/>
        <dbReference type="ChEBI" id="CHEBI:57609"/>
        <dbReference type="ChEBI" id="CHEBI:57791"/>
        <dbReference type="EC" id="5.1.1.7"/>
    </reaction>
</comment>
<comment type="pathway">
    <text evidence="1">Amino-acid biosynthesis; L-lysine biosynthesis via DAP pathway; DL-2,6-diaminopimelate from LL-2,6-diaminopimelate: step 1/1.</text>
</comment>
<comment type="subunit">
    <text evidence="1">Homodimer.</text>
</comment>
<comment type="subcellular location">
    <subcellularLocation>
        <location evidence="1">Cytoplasm</location>
    </subcellularLocation>
</comment>
<comment type="similarity">
    <text evidence="1">Belongs to the diaminopimelate epimerase family.</text>
</comment>
<keyword id="KW-0028">Amino-acid biosynthesis</keyword>
<keyword id="KW-0963">Cytoplasm</keyword>
<keyword id="KW-0413">Isomerase</keyword>
<keyword id="KW-0457">Lysine biosynthesis</keyword>
<keyword id="KW-1185">Reference proteome</keyword>
<accession>Q3IEW3</accession>
<reference key="1">
    <citation type="journal article" date="2005" name="Genome Res.">
        <title>Coping with cold: the genome of the versatile marine Antarctica bacterium Pseudoalteromonas haloplanktis TAC125.</title>
        <authorList>
            <person name="Medigue C."/>
            <person name="Krin E."/>
            <person name="Pascal G."/>
            <person name="Barbe V."/>
            <person name="Bernsel A."/>
            <person name="Bertin P.N."/>
            <person name="Cheung F."/>
            <person name="Cruveiller S."/>
            <person name="D'Amico S."/>
            <person name="Duilio A."/>
            <person name="Fang G."/>
            <person name="Feller G."/>
            <person name="Ho C."/>
            <person name="Mangenot S."/>
            <person name="Marino G."/>
            <person name="Nilsson J."/>
            <person name="Parrilli E."/>
            <person name="Rocha E.P.C."/>
            <person name="Rouy Z."/>
            <person name="Sekowska A."/>
            <person name="Tutino M.L."/>
            <person name="Vallenet D."/>
            <person name="von Heijne G."/>
            <person name="Danchin A."/>
        </authorList>
    </citation>
    <scope>NUCLEOTIDE SEQUENCE [LARGE SCALE GENOMIC DNA]</scope>
    <source>
        <strain>TAC 125</strain>
    </source>
</reference>
<evidence type="ECO:0000255" key="1">
    <source>
        <dbReference type="HAMAP-Rule" id="MF_00197"/>
    </source>
</evidence>
<organism>
    <name type="scientific">Pseudoalteromonas translucida (strain TAC 125)</name>
    <dbReference type="NCBI Taxonomy" id="326442"/>
    <lineage>
        <taxon>Bacteria</taxon>
        <taxon>Pseudomonadati</taxon>
        <taxon>Pseudomonadota</taxon>
        <taxon>Gammaproteobacteria</taxon>
        <taxon>Alteromonadales</taxon>
        <taxon>Pseudoalteromonadaceae</taxon>
        <taxon>Pseudoalteromonas</taxon>
    </lineage>
</organism>
<feature type="chain" id="PRO_1000011933" description="Diaminopimelate epimerase">
    <location>
        <begin position="1"/>
        <end position="276"/>
    </location>
</feature>
<feature type="active site" description="Proton donor" evidence="1">
    <location>
        <position position="75"/>
    </location>
</feature>
<feature type="active site" description="Proton acceptor" evidence="1">
    <location>
        <position position="219"/>
    </location>
</feature>
<feature type="binding site" evidence="1">
    <location>
        <position position="13"/>
    </location>
    <ligand>
        <name>substrate</name>
    </ligand>
</feature>
<feature type="binding site" evidence="1">
    <location>
        <position position="46"/>
    </location>
    <ligand>
        <name>substrate</name>
    </ligand>
</feature>
<feature type="binding site" evidence="1">
    <location>
        <position position="66"/>
    </location>
    <ligand>
        <name>substrate</name>
    </ligand>
</feature>
<feature type="binding site" evidence="1">
    <location>
        <begin position="76"/>
        <end position="77"/>
    </location>
    <ligand>
        <name>substrate</name>
    </ligand>
</feature>
<feature type="binding site" evidence="1">
    <location>
        <position position="159"/>
    </location>
    <ligand>
        <name>substrate</name>
    </ligand>
</feature>
<feature type="binding site" evidence="1">
    <location>
        <position position="192"/>
    </location>
    <ligand>
        <name>substrate</name>
    </ligand>
</feature>
<feature type="binding site" evidence="1">
    <location>
        <begin position="210"/>
        <end position="211"/>
    </location>
    <ligand>
        <name>substrate</name>
    </ligand>
</feature>
<feature type="binding site" evidence="1">
    <location>
        <begin position="220"/>
        <end position="221"/>
    </location>
    <ligand>
        <name>substrate</name>
    </ligand>
</feature>
<feature type="site" description="Could be important to modulate the pK values of the two catalytic cysteine residues" evidence="1">
    <location>
        <position position="161"/>
    </location>
</feature>
<feature type="site" description="Could be important to modulate the pK values of the two catalytic cysteine residues" evidence="1">
    <location>
        <position position="210"/>
    </location>
</feature>
<feature type="site" description="Important for dimerization" evidence="1">
    <location>
        <position position="270"/>
    </location>
</feature>
<name>DAPF_PSET1</name>
<sequence length="276" mass="30718">MLVNFSKMHGLGNDFVVIDNITQNVFLSRDQIIKLADRHFGIGFDQLLMVEAPYSPDLDFHYRIFNADGTEVEQCGNGARCFARFVRMKGLTNKHKITVSTKSGNLTLYIEKDGQVTVNMGHPNFEPSKIPLKATKRELTYIIRTEEHTVFSGAVSMGNPHCVLEVDDITTAQVDILGPLLENHERFPQRANIGFMQVISKEHIKLRVWERGVNETLACGTGACAAMVIGFIQNKLISTVQVDLPGGSLQIRWNGEGHPVRMTGPAEHVFDGQVAL</sequence>
<dbReference type="EC" id="5.1.1.7" evidence="1"/>
<dbReference type="EMBL" id="CR954246">
    <property type="protein sequence ID" value="CAI85201.1"/>
    <property type="molecule type" value="Genomic_DNA"/>
</dbReference>
<dbReference type="SMR" id="Q3IEW3"/>
<dbReference type="STRING" id="326442.PSHAa0092"/>
<dbReference type="KEGG" id="pha:PSHAa0092"/>
<dbReference type="PATRIC" id="fig|326442.8.peg.91"/>
<dbReference type="eggNOG" id="COG0253">
    <property type="taxonomic scope" value="Bacteria"/>
</dbReference>
<dbReference type="HOGENOM" id="CLU_053306_1_1_6"/>
<dbReference type="BioCyc" id="PHAL326442:PSHA_RS00470-MONOMER"/>
<dbReference type="UniPathway" id="UPA00034">
    <property type="reaction ID" value="UER00025"/>
</dbReference>
<dbReference type="Proteomes" id="UP000006843">
    <property type="component" value="Chromosome I"/>
</dbReference>
<dbReference type="GO" id="GO:0005829">
    <property type="term" value="C:cytosol"/>
    <property type="evidence" value="ECO:0007669"/>
    <property type="project" value="TreeGrafter"/>
</dbReference>
<dbReference type="GO" id="GO:0008837">
    <property type="term" value="F:diaminopimelate epimerase activity"/>
    <property type="evidence" value="ECO:0007669"/>
    <property type="project" value="UniProtKB-UniRule"/>
</dbReference>
<dbReference type="GO" id="GO:0009089">
    <property type="term" value="P:lysine biosynthetic process via diaminopimelate"/>
    <property type="evidence" value="ECO:0007669"/>
    <property type="project" value="UniProtKB-UniRule"/>
</dbReference>
<dbReference type="FunFam" id="3.10.310.10:FF:000001">
    <property type="entry name" value="Diaminopimelate epimerase"/>
    <property type="match status" value="1"/>
</dbReference>
<dbReference type="FunFam" id="3.10.310.10:FF:000002">
    <property type="entry name" value="Diaminopimelate epimerase"/>
    <property type="match status" value="1"/>
</dbReference>
<dbReference type="Gene3D" id="3.10.310.10">
    <property type="entry name" value="Diaminopimelate Epimerase, Chain A, domain 1"/>
    <property type="match status" value="2"/>
</dbReference>
<dbReference type="HAMAP" id="MF_00197">
    <property type="entry name" value="DAP_epimerase"/>
    <property type="match status" value="1"/>
</dbReference>
<dbReference type="InterPro" id="IPR018510">
    <property type="entry name" value="DAP_epimerase_AS"/>
</dbReference>
<dbReference type="InterPro" id="IPR001653">
    <property type="entry name" value="DAP_epimerase_DapF"/>
</dbReference>
<dbReference type="NCBIfam" id="TIGR00652">
    <property type="entry name" value="DapF"/>
    <property type="match status" value="1"/>
</dbReference>
<dbReference type="PANTHER" id="PTHR31689:SF0">
    <property type="entry name" value="DIAMINOPIMELATE EPIMERASE"/>
    <property type="match status" value="1"/>
</dbReference>
<dbReference type="PANTHER" id="PTHR31689">
    <property type="entry name" value="DIAMINOPIMELATE EPIMERASE, CHLOROPLASTIC"/>
    <property type="match status" value="1"/>
</dbReference>
<dbReference type="Pfam" id="PF01678">
    <property type="entry name" value="DAP_epimerase"/>
    <property type="match status" value="2"/>
</dbReference>
<dbReference type="SUPFAM" id="SSF54506">
    <property type="entry name" value="Diaminopimelate epimerase-like"/>
    <property type="match status" value="1"/>
</dbReference>
<dbReference type="PROSITE" id="PS01326">
    <property type="entry name" value="DAP_EPIMERASE"/>
    <property type="match status" value="1"/>
</dbReference>
<gene>
    <name evidence="1" type="primary">dapF</name>
    <name type="ordered locus">PSHAa0092</name>
</gene>
<protein>
    <recommendedName>
        <fullName evidence="1">Diaminopimelate epimerase</fullName>
        <shortName evidence="1">DAP epimerase</shortName>
        <ecNumber evidence="1">5.1.1.7</ecNumber>
    </recommendedName>
    <alternativeName>
        <fullName evidence="1">PLP-independent amino acid racemase</fullName>
    </alternativeName>
</protein>